<reference key="1">
    <citation type="journal article" date="2001" name="Chem. Biol.">
        <title>Cloning and analysis of the spinosad biosynthetic gene cluster of Saccharopolyspora spinosa.</title>
        <authorList>
            <person name="Waldron C."/>
            <person name="Matsushima P."/>
            <person name="Rosteck P.R. Jr."/>
            <person name="Broughton M.C."/>
            <person name="Turner J."/>
            <person name="Madduri K."/>
            <person name="Crawford K.P."/>
            <person name="Merlo D.J."/>
            <person name="Baltz R.H."/>
        </authorList>
    </citation>
    <scope>NUCLEOTIDE SEQUENCE [GENOMIC DNA]</scope>
    <scope>FUNCTION</scope>
</reference>
<reference key="2">
    <citation type="journal article" date="2008" name="J. Am. Chem. Soc.">
        <title>In vitro characterization of the enzymes involved in TDP-D-forosamine biosynthesis in the spinosyn pathway of Saccharopolyspora spinosa.</title>
        <authorList>
            <person name="Hong L."/>
            <person name="Zhao Z."/>
            <person name="Melancon C.E. III"/>
            <person name="Zhang H."/>
            <person name="Liu H.W."/>
        </authorList>
    </citation>
    <scope>FUNCTION</scope>
    <scope>CATALYTIC ACTIVITY</scope>
    <scope>COFACTOR</scope>
    <scope>SUBSTRATE SPECIFICITY</scope>
    <scope>SUBUNIT</scope>
    <source>
        <strain>NRRL 18537</strain>
    </source>
</reference>
<comment type="function">
    <text evidence="2 3">Involved in the biosynthesis of forosamine ((4-dimethylamino)-2,3,4,6-tetradeoxy-alpha-D-threo-hexopyranose), a highly deoxygenated sugar component of several bioactive natural products such as the insecticidal spinosyns A and D (PubMed:11358695, PubMed:18345667). In the presence of pyridoxal 5'-phosphate (PLP) and alpha-ketoglutarate, catalyzes the C-4 transamination of dTDP-4-keto-2,3,6-trideoxy-alpha-D-glucose to yield dTDP-4-amino-2,3,4,6-tetradeoxy-alpha-D-glucose (PubMed:18345667). It can also use pyruvate, but less efficiently than alpha-ketoglutarate (PubMed:18345667). Also able to catalyze the C-4 transamination of dTDP-4-keto-2,6-dideoxy-alpha-D-glucose to yield dTDP-4-amino-2,4,6-trideoxy-D-glucose (PubMed:18345667).</text>
</comment>
<comment type="catalytic activity">
    <reaction evidence="3">
        <text>dTDP-4-amino-2,3,4,6-tetradeoxy-alpha-D-erythro-hexopyranose + 2-oxoglutarate = dTDP-4-dehydro-2,3,6-trideoxy-alpha-D-hexopyranose + L-glutamate</text>
        <dbReference type="Rhea" id="RHEA:49144"/>
        <dbReference type="ChEBI" id="CHEBI:16810"/>
        <dbReference type="ChEBI" id="CHEBI:29985"/>
        <dbReference type="ChEBI" id="CHEBI:90944"/>
        <dbReference type="ChEBI" id="CHEBI:90945"/>
        <dbReference type="EC" id="2.6.1.110"/>
    </reaction>
</comment>
<comment type="cofactor">
    <cofactor evidence="3">
        <name>pyridoxal 5'-phosphate</name>
        <dbReference type="ChEBI" id="CHEBI:597326"/>
    </cofactor>
</comment>
<comment type="subunit">
    <text evidence="3">Homodimer.</text>
</comment>
<comment type="similarity">
    <text evidence="6">Belongs to the DegT/DnrJ/EryC1 family.</text>
</comment>
<organism>
    <name type="scientific">Saccharopolyspora spinosa</name>
    <dbReference type="NCBI Taxonomy" id="60894"/>
    <lineage>
        <taxon>Bacteria</taxon>
        <taxon>Bacillati</taxon>
        <taxon>Actinomycetota</taxon>
        <taxon>Actinomycetes</taxon>
        <taxon>Pseudonocardiales</taxon>
        <taxon>Pseudonocardiaceae</taxon>
        <taxon>Saccharopolyspora</taxon>
    </lineage>
</organism>
<sequence length="385" mass="42296">MINLHQPILGTEELDAIAEVFASNWIGLGPRTRTFEAEFAHHLGVDPEQVVFLNSGTAALFLTVQVLDLGPGDDVVLPSISFVAAANAIASSGARPVFCDVDPRTLNPTLDDVARAITPATKAVLLLHYGGSPGEVTAIADFCREKGLMLIEDSACAVASSVHGTACGTFGDLATWSFDAMKILVTGDGGMFYAADPELAHRARRLAYHGLEQMSGFDSAKSSNRWWDIRVEDIGQRLIGNDMTAALGSVQLRKLPEFINRRREIATQYDRLLSDVPGVLLPPTLPDGHVSSHYFYWVQLAPEIRDQVAQQMLERGIYTSYRYPPLHKVPIYRADCKLPSAEDACRRTLLLPLHPSLDDAEVRTVADEFQKAVEHHISQRSPLRK</sequence>
<evidence type="ECO:0000250" key="1">
    <source>
        <dbReference type="UniProtKB" id="A8GDR5"/>
    </source>
</evidence>
<evidence type="ECO:0000269" key="2">
    <source>
    </source>
</evidence>
<evidence type="ECO:0000269" key="3">
    <source>
    </source>
</evidence>
<evidence type="ECO:0000303" key="4">
    <source>
    </source>
</evidence>
<evidence type="ECO:0000303" key="5">
    <source>
    </source>
</evidence>
<evidence type="ECO:0000305" key="6"/>
<dbReference type="EC" id="2.6.1.110" evidence="3"/>
<dbReference type="EMBL" id="AY007564">
    <property type="protein sequence ID" value="AAG23279.1"/>
    <property type="molecule type" value="Genomic_DNA"/>
</dbReference>
<dbReference type="SMR" id="Q9ALN9"/>
<dbReference type="STRING" id="994479.GCA_000194155_04546"/>
<dbReference type="KEGG" id="ag:AAG23279"/>
<dbReference type="BioCyc" id="MetaCyc:MONOMER-16622"/>
<dbReference type="BRENDA" id="2.6.1.110">
    <property type="organism ID" value="13744"/>
</dbReference>
<dbReference type="GO" id="GO:0030170">
    <property type="term" value="F:pyridoxal phosphate binding"/>
    <property type="evidence" value="ECO:0007669"/>
    <property type="project" value="TreeGrafter"/>
</dbReference>
<dbReference type="GO" id="GO:0008483">
    <property type="term" value="F:transaminase activity"/>
    <property type="evidence" value="ECO:0007669"/>
    <property type="project" value="UniProtKB-KW"/>
</dbReference>
<dbReference type="GO" id="GO:0000271">
    <property type="term" value="P:polysaccharide biosynthetic process"/>
    <property type="evidence" value="ECO:0007669"/>
    <property type="project" value="TreeGrafter"/>
</dbReference>
<dbReference type="CDD" id="cd00616">
    <property type="entry name" value="AHBA_syn"/>
    <property type="match status" value="1"/>
</dbReference>
<dbReference type="Gene3D" id="3.90.1150.10">
    <property type="entry name" value="Aspartate Aminotransferase, domain 1"/>
    <property type="match status" value="1"/>
</dbReference>
<dbReference type="Gene3D" id="3.40.640.10">
    <property type="entry name" value="Type I PLP-dependent aspartate aminotransferase-like (Major domain)"/>
    <property type="match status" value="1"/>
</dbReference>
<dbReference type="InterPro" id="IPR000653">
    <property type="entry name" value="DegT/StrS_aminotransferase"/>
</dbReference>
<dbReference type="InterPro" id="IPR015424">
    <property type="entry name" value="PyrdxlP-dep_Trfase"/>
</dbReference>
<dbReference type="InterPro" id="IPR015421">
    <property type="entry name" value="PyrdxlP-dep_Trfase_major"/>
</dbReference>
<dbReference type="InterPro" id="IPR015422">
    <property type="entry name" value="PyrdxlP-dep_Trfase_small"/>
</dbReference>
<dbReference type="PANTHER" id="PTHR30244:SF34">
    <property type="entry name" value="DTDP-4-AMINO-4,6-DIDEOXYGALACTOSE TRANSAMINASE"/>
    <property type="match status" value="1"/>
</dbReference>
<dbReference type="PANTHER" id="PTHR30244">
    <property type="entry name" value="TRANSAMINASE"/>
    <property type="match status" value="1"/>
</dbReference>
<dbReference type="Pfam" id="PF01041">
    <property type="entry name" value="DegT_DnrJ_EryC1"/>
    <property type="match status" value="1"/>
</dbReference>
<dbReference type="PIRSF" id="PIRSF000390">
    <property type="entry name" value="PLP_StrS"/>
    <property type="match status" value="1"/>
</dbReference>
<dbReference type="SUPFAM" id="SSF53383">
    <property type="entry name" value="PLP-dependent transferases"/>
    <property type="match status" value="1"/>
</dbReference>
<accession>Q9ALN9</accession>
<gene>
    <name evidence="4" type="primary">spnR</name>
</gene>
<feature type="chain" id="PRO_0000444372" description="dTDP-4-dehydro-2,3,6-trideoxy-D-glucose 4-aminotransferase">
    <location>
        <begin position="1"/>
        <end position="385"/>
    </location>
</feature>
<feature type="modified residue" description="N6-(pyridoxal phosphate)lysine" evidence="1">
    <location>
        <position position="182"/>
    </location>
</feature>
<name>SPNR_SACSN</name>
<protein>
    <recommendedName>
        <fullName evidence="5">dTDP-4-dehydro-2,3,6-trideoxy-D-glucose 4-aminotransferase</fullName>
        <ecNumber evidence="3">2.6.1.110</ecNumber>
    </recommendedName>
    <alternativeName>
        <fullName evidence="5">dTDP-4-keto-2,3,6-trideoxy-D-glucose 4-aminotransferase</fullName>
    </alternativeName>
</protein>
<keyword id="KW-0032">Aminotransferase</keyword>
<keyword id="KW-0663">Pyridoxal phosphate</keyword>
<keyword id="KW-0808">Transferase</keyword>
<proteinExistence type="evidence at protein level"/>